<sequence length="80" mass="8799">MEARVLWLLALVLALGSSSLADQYVGLSENLCAVPAKNRVDCGYPEISPEQCVNRGCCFDSSIPEVPWCFKPLQDTECTF</sequence>
<feature type="signal peptide" evidence="3">
    <location>
        <begin position="1"/>
        <end position="21"/>
    </location>
</feature>
<feature type="chain" id="PRO_0000376810" description="Trefoil factor 3">
    <location>
        <begin position="22"/>
        <end position="80"/>
    </location>
</feature>
<feature type="domain" description="P-type" evidence="4">
    <location>
        <begin position="30"/>
        <end position="73"/>
    </location>
</feature>
<feature type="disulfide bond" evidence="4">
    <location>
        <begin position="32"/>
        <end position="58"/>
    </location>
</feature>
<feature type="disulfide bond" evidence="4">
    <location>
        <begin position="42"/>
        <end position="57"/>
    </location>
</feature>
<feature type="disulfide bond" evidence="4">
    <location>
        <begin position="52"/>
        <end position="69"/>
    </location>
</feature>
<feature type="disulfide bond" description="Interchain" evidence="4">
    <location>
        <position position="78"/>
    </location>
</feature>
<organism>
    <name type="scientific">Felis catus</name>
    <name type="common">Cat</name>
    <name type="synonym">Felis silvestris catus</name>
    <dbReference type="NCBI Taxonomy" id="9685"/>
    <lineage>
        <taxon>Eukaryota</taxon>
        <taxon>Metazoa</taxon>
        <taxon>Chordata</taxon>
        <taxon>Craniata</taxon>
        <taxon>Vertebrata</taxon>
        <taxon>Euteleostomi</taxon>
        <taxon>Mammalia</taxon>
        <taxon>Eutheria</taxon>
        <taxon>Laurasiatheria</taxon>
        <taxon>Carnivora</taxon>
        <taxon>Feliformia</taxon>
        <taxon>Felidae</taxon>
        <taxon>Felinae</taxon>
        <taxon>Felis</taxon>
    </lineage>
</organism>
<name>TFF3_FELCA</name>
<dbReference type="EMBL" id="EF487347">
    <property type="protein sequence ID" value="ABS11940.1"/>
    <property type="molecule type" value="mRNA"/>
</dbReference>
<dbReference type="EMBL" id="EF487350">
    <property type="protein sequence ID" value="ABS11943.1"/>
    <property type="molecule type" value="mRNA"/>
</dbReference>
<dbReference type="EMBL" id="EF487353">
    <property type="protein sequence ID" value="ABS11946.1"/>
    <property type="molecule type" value="mRNA"/>
</dbReference>
<dbReference type="RefSeq" id="NP_001123862.1">
    <property type="nucleotide sequence ID" value="NM_001130390.1"/>
</dbReference>
<dbReference type="SMR" id="B4X8D9"/>
<dbReference type="FunCoup" id="B4X8D9">
    <property type="interactions" value="1"/>
</dbReference>
<dbReference type="STRING" id="9685.ENSFCAP00000016668"/>
<dbReference type="PaxDb" id="9685-ENSFCAP00000016668"/>
<dbReference type="Ensembl" id="ENSFCAT00000032524.3">
    <property type="protein sequence ID" value="ENSFCAP00000016668.2"/>
    <property type="gene ID" value="ENSFCAG00000029722.3"/>
</dbReference>
<dbReference type="GeneID" id="100170655"/>
<dbReference type="KEGG" id="fca:100170655"/>
<dbReference type="CTD" id="7033"/>
<dbReference type="VGNC" id="VGNC:66121">
    <property type="gene designation" value="TFF3"/>
</dbReference>
<dbReference type="eggNOG" id="ENOG502SV7V">
    <property type="taxonomic scope" value="Eukaryota"/>
</dbReference>
<dbReference type="GeneTree" id="ENSGT00940000162416"/>
<dbReference type="InParanoid" id="B4X8D9"/>
<dbReference type="OMA" id="QETECTF"/>
<dbReference type="OrthoDB" id="10051464at2759"/>
<dbReference type="Proteomes" id="UP000011712">
    <property type="component" value="Chromosome C2"/>
</dbReference>
<dbReference type="Bgee" id="ENSFCAG00000029722">
    <property type="expression patterns" value="Expressed in liver and 5 other cell types or tissues"/>
</dbReference>
<dbReference type="GO" id="GO:0005615">
    <property type="term" value="C:extracellular space"/>
    <property type="evidence" value="ECO:0000318"/>
    <property type="project" value="GO_Central"/>
</dbReference>
<dbReference type="GO" id="GO:0030141">
    <property type="term" value="C:secretory granule"/>
    <property type="evidence" value="ECO:0007669"/>
    <property type="project" value="Ensembl"/>
</dbReference>
<dbReference type="GO" id="GO:0042802">
    <property type="term" value="F:identical protein binding"/>
    <property type="evidence" value="ECO:0007669"/>
    <property type="project" value="Ensembl"/>
</dbReference>
<dbReference type="GO" id="GO:0030277">
    <property type="term" value="P:maintenance of gastrointestinal epithelium"/>
    <property type="evidence" value="ECO:0000318"/>
    <property type="project" value="GO_Central"/>
</dbReference>
<dbReference type="GO" id="GO:0010906">
    <property type="term" value="P:regulation of glucose metabolic process"/>
    <property type="evidence" value="ECO:0007669"/>
    <property type="project" value="Ensembl"/>
</dbReference>
<dbReference type="CDD" id="cd00111">
    <property type="entry name" value="Trefoil"/>
    <property type="match status" value="1"/>
</dbReference>
<dbReference type="FunFam" id="4.10.110.10:FF:000001">
    <property type="entry name" value="Trefoil factor 3"/>
    <property type="match status" value="1"/>
</dbReference>
<dbReference type="Gene3D" id="4.10.110.10">
    <property type="entry name" value="Spasmolytic Protein, domain 1"/>
    <property type="match status" value="1"/>
</dbReference>
<dbReference type="InterPro" id="IPR017994">
    <property type="entry name" value="P_trefoil_chordata"/>
</dbReference>
<dbReference type="InterPro" id="IPR017957">
    <property type="entry name" value="P_trefoil_CS"/>
</dbReference>
<dbReference type="InterPro" id="IPR000519">
    <property type="entry name" value="P_trefoil_dom"/>
</dbReference>
<dbReference type="InterPro" id="IPR044913">
    <property type="entry name" value="P_trefoil_dom_sf"/>
</dbReference>
<dbReference type="PANTHER" id="PTHR13826">
    <property type="entry name" value="INTESTINAL TREFOIL FACTOR-RELATED"/>
    <property type="match status" value="1"/>
</dbReference>
<dbReference type="PANTHER" id="PTHR13826:SF16">
    <property type="entry name" value="TREFOIL FACTOR 3"/>
    <property type="match status" value="1"/>
</dbReference>
<dbReference type="Pfam" id="PF00088">
    <property type="entry name" value="Trefoil"/>
    <property type="match status" value="1"/>
</dbReference>
<dbReference type="PRINTS" id="PR00680">
    <property type="entry name" value="PTREFOIL"/>
</dbReference>
<dbReference type="SMART" id="SM00018">
    <property type="entry name" value="PD"/>
    <property type="match status" value="1"/>
</dbReference>
<dbReference type="SUPFAM" id="SSF57492">
    <property type="entry name" value="Trefoil"/>
    <property type="match status" value="1"/>
</dbReference>
<dbReference type="PROSITE" id="PS00025">
    <property type="entry name" value="P_TREFOIL_1"/>
    <property type="match status" value="1"/>
</dbReference>
<dbReference type="PROSITE" id="PS51448">
    <property type="entry name" value="P_TREFOIL_2"/>
    <property type="match status" value="1"/>
</dbReference>
<reference key="1">
    <citation type="submission" date="2007-03" db="EMBL/GenBank/DDBJ databases">
        <title>Nucleotide and deduced amino acid sequences of feline trefoil peptides TFF1, TFF2, and TFF3.</title>
        <authorList>
            <person name="Campbell B.G."/>
            <person name="Jabbes M."/>
        </authorList>
    </citation>
    <scope>NUCLEOTIDE SEQUENCE [MRNA]</scope>
    <source>
        <tissue>Colon mucosa</tissue>
    </source>
</reference>
<keyword id="KW-0963">Cytoplasm</keyword>
<keyword id="KW-1015">Disulfide bond</keyword>
<keyword id="KW-0272">Extracellular matrix</keyword>
<keyword id="KW-1185">Reference proteome</keyword>
<keyword id="KW-0964">Secreted</keyword>
<keyword id="KW-0732">Signal</keyword>
<proteinExistence type="inferred from homology"/>
<protein>
    <recommendedName>
        <fullName>Trefoil factor 3</fullName>
    </recommendedName>
    <alternativeName>
        <fullName>Intestinal trefoil factor</fullName>
    </alternativeName>
</protein>
<accession>B4X8D9</accession>
<gene>
    <name type="primary">TFF3</name>
    <name type="synonym">ITF</name>
</gene>
<evidence type="ECO:0000250" key="1"/>
<evidence type="ECO:0000250" key="2">
    <source>
        <dbReference type="UniProtKB" id="Q07654"/>
    </source>
</evidence>
<evidence type="ECO:0000255" key="3"/>
<evidence type="ECO:0000255" key="4">
    <source>
        <dbReference type="PROSITE-ProRule" id="PRU00779"/>
    </source>
</evidence>
<comment type="function">
    <text evidence="1">Involved in the maintenance and repair of the intestinal mucosa. Promotes the mobility of epithelial cells in healing processes (motogen) (By similarity).</text>
</comment>
<comment type="subunit">
    <text evidence="1">Monomer. Homodimer; disulfide-linked.</text>
</comment>
<comment type="subcellular location">
    <subcellularLocation>
        <location evidence="2">Secreted</location>
        <location evidence="2">Extracellular space</location>
        <location evidence="2">Extracellular matrix</location>
    </subcellularLocation>
    <subcellularLocation>
        <location evidence="2">Cytoplasm</location>
    </subcellularLocation>
</comment>